<keyword id="KW-0997">Cell inner membrane</keyword>
<keyword id="KW-1003">Cell membrane</keyword>
<keyword id="KW-0472">Membrane</keyword>
<keyword id="KW-0812">Transmembrane</keyword>
<keyword id="KW-1133">Transmembrane helix</keyword>
<keyword id="KW-0813">Transport</keyword>
<reference key="1">
    <citation type="journal article" date="2008" name="J. Bacteriol.">
        <title>The pangenome structure of Escherichia coli: comparative genomic analysis of E. coli commensal and pathogenic isolates.</title>
        <authorList>
            <person name="Rasko D.A."/>
            <person name="Rosovitz M.J."/>
            <person name="Myers G.S.A."/>
            <person name="Mongodin E.F."/>
            <person name="Fricke W.F."/>
            <person name="Gajer P."/>
            <person name="Crabtree J."/>
            <person name="Sebaihia M."/>
            <person name="Thomson N.R."/>
            <person name="Chaudhuri R."/>
            <person name="Henderson I.R."/>
            <person name="Sperandio V."/>
            <person name="Ravel J."/>
        </authorList>
    </citation>
    <scope>NUCLEOTIDE SEQUENCE [LARGE SCALE GENOMIC DNA]</scope>
    <source>
        <strain>HS</strain>
    </source>
</reference>
<comment type="function">
    <text evidence="1">The MdtABC tripartite complex confers resistance against novobiocin and deoxycholate.</text>
</comment>
<comment type="subunit">
    <text evidence="1">Part of a tripartite efflux system composed of MdtA, MdtB and MdtC. MdtC forms a heteromultimer with MdtB.</text>
</comment>
<comment type="subcellular location">
    <subcellularLocation>
        <location evidence="1">Cell inner membrane</location>
        <topology evidence="1">Multi-pass membrane protein</topology>
    </subcellularLocation>
</comment>
<comment type="induction">
    <text>The mdtABC operon is transcriptionally activated by BaeR.</text>
</comment>
<comment type="similarity">
    <text evidence="1">Belongs to the resistance-nodulation-cell division (RND) (TC 2.A.6) family. MdtC subfamily.</text>
</comment>
<protein>
    <recommendedName>
        <fullName evidence="1">Multidrug resistance protein MdtC</fullName>
    </recommendedName>
    <alternativeName>
        <fullName evidence="1">Multidrug transporter MdtC</fullName>
    </alternativeName>
</protein>
<name>MDTC_ECOHS</name>
<sequence length="1025" mass="111067">MKFFALFIYRPVATILLSVAITLCGILGFRMLPVAPLPQVDFPVIMVSASLPGASPETMASSVATPLERSLGRIAGVSEMTSSSSLGSTRIILQFDFDRDINGAARDVQAAINAAQSLLPSGMPSRPTYRKANPSDAPIMILTLTSDTYSQGELYDFASTQLAPTISQIDGVGDVDVGGSSLPAVRVGLNPQALFNQGVSLDDVRTAVSNANVRKPQGALEDGTHRWQIQTNDELKTAAEYQPLIIHYNNGGAVRLGDVATVTDSVQDVRNAGMTNAKPAILLMIRKLPEANIIQTVDSIRAKLPELQETIPAAIDLQIAQDRSPTIRASLEEVEQTLIISVALVILVVFLFLRSGRATIIPAVSVPVSLIGTFAAMYLCGFSLNNLSLMALTIATGFVVDDAIVVLENIARHLEAGMKPLQAALQGTREVGFTVLSMSLSLVAVFLPLLLMGGLPGRLLREFTVTLSVAIGISLLVSLTLTPMMCGWMLKASKPREQKRLRGFGRMLVALQQGYGKSLKWVLNHTRLVGVVLLGTIALNIWLYISIPKTFFPEQDTGVLMGGIQADQSISFQAMRGKLQDFMKIIRDDPAVDNVTGFTGGSRVNSGMMFITLKPRDERSETAQQIIDRLRVKLAKEPGANLFLMAVQDIRVGGRQSNASYQYTLLSDDLAALREWEPKIRKKLATLPELADVNSDQQDNGAEMNLVYDRDTMARLGIDVQAANSLLNNAFGQRQISTIYQPMNQYKVVMEVDPRYTQDISALEKMFVINNEGKAIPLSYFAKWQPANAPLSVNHQGLSAASTISFNLPTGKSLSDASAAIDRAMTQLGVPSTVRGSFAGTAQVFQETMNSQVILIIAAIATVYIVLGILYESYVHPLTILSTLPSAGVGALLALELFNAPFSLIALIGIMLLIGIVKKNAIMMVDFALEAQRHGNLTPQEAIFQACLLRFRPIMMTTLAALFGALPLVLSGGDGSELRHPLGITIVGGLVMSQLLTLYTTPVVYLFFDRLRLRFSRKPKQTVTE</sequence>
<feature type="chain" id="PRO_1000068507" description="Multidrug resistance protein MdtC">
    <location>
        <begin position="1"/>
        <end position="1025"/>
    </location>
</feature>
<feature type="transmembrane region" description="Helical" evidence="1">
    <location>
        <begin position="3"/>
        <end position="23"/>
    </location>
</feature>
<feature type="transmembrane region" description="Helical" evidence="1">
    <location>
        <begin position="333"/>
        <end position="353"/>
    </location>
</feature>
<feature type="transmembrane region" description="Helical" evidence="1">
    <location>
        <begin position="360"/>
        <end position="380"/>
    </location>
</feature>
<feature type="transmembrane region" description="Helical" evidence="1">
    <location>
        <begin position="387"/>
        <end position="407"/>
    </location>
</feature>
<feature type="transmembrane region" description="Helical" evidence="1">
    <location>
        <begin position="431"/>
        <end position="451"/>
    </location>
</feature>
<feature type="transmembrane region" description="Helical" evidence="1">
    <location>
        <begin position="469"/>
        <end position="489"/>
    </location>
</feature>
<feature type="transmembrane region" description="Helical" evidence="1">
    <location>
        <begin position="528"/>
        <end position="548"/>
    </location>
</feature>
<feature type="transmembrane region" description="Helical" evidence="1">
    <location>
        <begin position="853"/>
        <end position="873"/>
    </location>
</feature>
<feature type="transmembrane region" description="Helical" evidence="1">
    <location>
        <begin position="875"/>
        <end position="895"/>
    </location>
</feature>
<feature type="transmembrane region" description="Helical" evidence="1">
    <location>
        <begin position="897"/>
        <end position="917"/>
    </location>
</feature>
<feature type="transmembrane region" description="Helical" evidence="1">
    <location>
        <begin position="953"/>
        <end position="973"/>
    </location>
</feature>
<feature type="transmembrane region" description="Helical" evidence="1">
    <location>
        <begin position="984"/>
        <end position="1004"/>
    </location>
</feature>
<evidence type="ECO:0000255" key="1">
    <source>
        <dbReference type="HAMAP-Rule" id="MF_01424"/>
    </source>
</evidence>
<organism>
    <name type="scientific">Escherichia coli O9:H4 (strain HS)</name>
    <dbReference type="NCBI Taxonomy" id="331112"/>
    <lineage>
        <taxon>Bacteria</taxon>
        <taxon>Pseudomonadati</taxon>
        <taxon>Pseudomonadota</taxon>
        <taxon>Gammaproteobacteria</taxon>
        <taxon>Enterobacterales</taxon>
        <taxon>Enterobacteriaceae</taxon>
        <taxon>Escherichia</taxon>
    </lineage>
</organism>
<dbReference type="EMBL" id="CP000802">
    <property type="protein sequence ID" value="ABV06502.1"/>
    <property type="molecule type" value="Genomic_DNA"/>
</dbReference>
<dbReference type="RefSeq" id="WP_000667589.1">
    <property type="nucleotide sequence ID" value="NC_009800.1"/>
</dbReference>
<dbReference type="SMR" id="A8A1U8"/>
<dbReference type="KEGG" id="ecx:EcHS_A2218"/>
<dbReference type="HOGENOM" id="CLU_002755_1_2_6"/>
<dbReference type="GO" id="GO:0005886">
    <property type="term" value="C:plasma membrane"/>
    <property type="evidence" value="ECO:0007669"/>
    <property type="project" value="UniProtKB-SubCell"/>
</dbReference>
<dbReference type="GO" id="GO:0042910">
    <property type="term" value="F:xenobiotic transmembrane transporter activity"/>
    <property type="evidence" value="ECO:0007669"/>
    <property type="project" value="TreeGrafter"/>
</dbReference>
<dbReference type="FunFam" id="1.20.1640.10:FF:000001">
    <property type="entry name" value="Efflux pump membrane transporter"/>
    <property type="match status" value="1"/>
</dbReference>
<dbReference type="FunFam" id="3.30.70.1430:FF:000001">
    <property type="entry name" value="Efflux pump membrane transporter"/>
    <property type="match status" value="1"/>
</dbReference>
<dbReference type="FunFam" id="3.30.2090.10:FF:000004">
    <property type="entry name" value="Multidrug resistance protein MdtC"/>
    <property type="match status" value="1"/>
</dbReference>
<dbReference type="FunFam" id="3.30.2090.10:FF:000005">
    <property type="entry name" value="Multidrug resistance protein MdtC"/>
    <property type="match status" value="1"/>
</dbReference>
<dbReference type="FunFam" id="3.30.70.1430:FF:000004">
    <property type="entry name" value="Multidrug resistance protein MdtC"/>
    <property type="match status" value="1"/>
</dbReference>
<dbReference type="Gene3D" id="3.30.70.1430">
    <property type="entry name" value="Multidrug efflux transporter AcrB pore domain"/>
    <property type="match status" value="2"/>
</dbReference>
<dbReference type="Gene3D" id="3.30.70.1440">
    <property type="entry name" value="Multidrug efflux transporter AcrB pore domain"/>
    <property type="match status" value="1"/>
</dbReference>
<dbReference type="Gene3D" id="3.30.70.1320">
    <property type="entry name" value="Multidrug efflux transporter AcrB pore domain like"/>
    <property type="match status" value="1"/>
</dbReference>
<dbReference type="Gene3D" id="3.30.2090.10">
    <property type="entry name" value="Multidrug efflux transporter AcrB TolC docking domain, DN and DC subdomains"/>
    <property type="match status" value="2"/>
</dbReference>
<dbReference type="Gene3D" id="1.20.1640.10">
    <property type="entry name" value="Multidrug efflux transporter AcrB transmembrane domain"/>
    <property type="match status" value="2"/>
</dbReference>
<dbReference type="HAMAP" id="MF_01424">
    <property type="entry name" value="MdtC"/>
    <property type="match status" value="1"/>
</dbReference>
<dbReference type="InterPro" id="IPR027463">
    <property type="entry name" value="AcrB_DN_DC_subdom"/>
</dbReference>
<dbReference type="InterPro" id="IPR001036">
    <property type="entry name" value="Acrflvin-R"/>
</dbReference>
<dbReference type="InterPro" id="IPR023931">
    <property type="entry name" value="Multidrug-R_MdtC"/>
</dbReference>
<dbReference type="NCBIfam" id="NF007905">
    <property type="entry name" value="PRK10614.1"/>
    <property type="match status" value="1"/>
</dbReference>
<dbReference type="NCBIfam" id="NF033617">
    <property type="entry name" value="RND_permease_2"/>
    <property type="match status" value="1"/>
</dbReference>
<dbReference type="PANTHER" id="PTHR32063">
    <property type="match status" value="1"/>
</dbReference>
<dbReference type="PANTHER" id="PTHR32063:SF34">
    <property type="entry name" value="MULTIDRUG RESISTANCE PROTEIN MDTC"/>
    <property type="match status" value="1"/>
</dbReference>
<dbReference type="Pfam" id="PF00873">
    <property type="entry name" value="ACR_tran"/>
    <property type="match status" value="1"/>
</dbReference>
<dbReference type="PRINTS" id="PR00702">
    <property type="entry name" value="ACRIFLAVINRP"/>
</dbReference>
<dbReference type="SUPFAM" id="SSF82693">
    <property type="entry name" value="Multidrug efflux transporter AcrB pore domain, PN1, PN2, PC1 and PC2 subdomains"/>
    <property type="match status" value="4"/>
</dbReference>
<dbReference type="SUPFAM" id="SSF82714">
    <property type="entry name" value="Multidrug efflux transporter AcrB TolC docking domain, DN and DC subdomains"/>
    <property type="match status" value="2"/>
</dbReference>
<dbReference type="SUPFAM" id="SSF82866">
    <property type="entry name" value="Multidrug efflux transporter AcrB transmembrane domain"/>
    <property type="match status" value="2"/>
</dbReference>
<gene>
    <name evidence="1" type="primary">mdtC</name>
    <name type="ordered locus">EcHS_A2218</name>
</gene>
<proteinExistence type="evidence at transcript level"/>
<accession>A8A1U8</accession>